<dbReference type="EC" id="3.1.1.61"/>
<dbReference type="EMBL" id="M35200">
    <property type="protein sequence ID" value="AAA25397.1"/>
    <property type="molecule type" value="Genomic_DNA"/>
</dbReference>
<dbReference type="PIR" id="A36707">
    <property type="entry name" value="A36707"/>
</dbReference>
<dbReference type="RefSeq" id="WP_011554142.1">
    <property type="nucleotide sequence ID" value="NZ_JABFNQ010000003.1"/>
</dbReference>
<dbReference type="SMR" id="P31758"/>
<dbReference type="OMA" id="TEGLAHW"/>
<dbReference type="GO" id="GO:0005737">
    <property type="term" value="C:cytoplasm"/>
    <property type="evidence" value="ECO:0007669"/>
    <property type="project" value="InterPro"/>
</dbReference>
<dbReference type="GO" id="GO:0000156">
    <property type="term" value="F:phosphorelay response regulator activity"/>
    <property type="evidence" value="ECO:0007669"/>
    <property type="project" value="InterPro"/>
</dbReference>
<dbReference type="GO" id="GO:0008984">
    <property type="term" value="F:protein-glutamate methylesterase activity"/>
    <property type="evidence" value="ECO:0007669"/>
    <property type="project" value="UniProtKB-EC"/>
</dbReference>
<dbReference type="GO" id="GO:0006935">
    <property type="term" value="P:chemotaxis"/>
    <property type="evidence" value="ECO:0007669"/>
    <property type="project" value="UniProtKB-KW"/>
</dbReference>
<dbReference type="CDD" id="cd16432">
    <property type="entry name" value="CheB_Rec"/>
    <property type="match status" value="1"/>
</dbReference>
<dbReference type="Gene3D" id="3.40.50.180">
    <property type="entry name" value="Methylesterase CheB, C-terminal domain"/>
    <property type="match status" value="1"/>
</dbReference>
<dbReference type="InterPro" id="IPR008248">
    <property type="entry name" value="CheB-like"/>
</dbReference>
<dbReference type="InterPro" id="IPR035909">
    <property type="entry name" value="CheB_C"/>
</dbReference>
<dbReference type="InterPro" id="IPR000673">
    <property type="entry name" value="Sig_transdc_resp-reg_Me-estase"/>
</dbReference>
<dbReference type="PANTHER" id="PTHR42872">
    <property type="entry name" value="PROTEIN-GLUTAMATE METHYLESTERASE/PROTEIN-GLUTAMINE GLUTAMINASE"/>
    <property type="match status" value="1"/>
</dbReference>
<dbReference type="PANTHER" id="PTHR42872:SF6">
    <property type="entry name" value="PROTEIN-GLUTAMATE METHYLESTERASE_PROTEIN-GLUTAMINE GLUTAMINASE"/>
    <property type="match status" value="1"/>
</dbReference>
<dbReference type="Pfam" id="PF01339">
    <property type="entry name" value="CheB_methylest"/>
    <property type="match status" value="1"/>
</dbReference>
<dbReference type="PIRSF" id="PIRSF000876">
    <property type="entry name" value="RR_chemtxs_CheB"/>
    <property type="match status" value="1"/>
</dbReference>
<dbReference type="SUPFAM" id="SSF52738">
    <property type="entry name" value="Methylesterase CheB, C-terminal domain"/>
    <property type="match status" value="1"/>
</dbReference>
<dbReference type="PROSITE" id="PS50122">
    <property type="entry name" value="CHEB"/>
    <property type="match status" value="1"/>
</dbReference>
<name>FRZG_MYXXA</name>
<comment type="function">
    <text evidence="1 3">Probable methylesterase (By similarity). Required for the normal aggregation of M.xanthus cells during fruiting body formation. It is also a component of a sensory transduction pathway that controls the frequency at which cells reverse their gliding direction. It may remove the methyl group from the gamma-glutamyl methyl ester residues in FrzCD.</text>
</comment>
<comment type="catalytic activity">
    <reaction>
        <text>[protein]-L-glutamate 5-O-methyl ester + H2O = L-glutamyl-[protein] + methanol + H(+)</text>
        <dbReference type="Rhea" id="RHEA:23236"/>
        <dbReference type="Rhea" id="RHEA-COMP:10208"/>
        <dbReference type="Rhea" id="RHEA-COMP:10311"/>
        <dbReference type="ChEBI" id="CHEBI:15377"/>
        <dbReference type="ChEBI" id="CHEBI:15378"/>
        <dbReference type="ChEBI" id="CHEBI:17790"/>
        <dbReference type="ChEBI" id="CHEBI:29973"/>
        <dbReference type="ChEBI" id="CHEBI:82795"/>
        <dbReference type="EC" id="3.1.1.61"/>
    </reaction>
</comment>
<reference key="1">
    <citation type="journal article" date="1990" name="J. Bacteriol.">
        <title>Developmental sensory transduction in Myxococcus xanthus involves methylation and demethylation of FrzCD.</title>
        <authorList>
            <person name="McCleary W.R."/>
            <person name="McBride M.J."/>
            <person name="Zusman D.R."/>
        </authorList>
    </citation>
    <scope>NUCLEOTIDE SEQUENCE [GENOMIC DNA]</scope>
    <scope>FUNCTION</scope>
    <source>
        <strain>DZF1</strain>
    </source>
</reference>
<feature type="chain" id="PRO_0000158059" description="Protein-glutamate methylesterase FrzG">
    <location>
        <begin position="1"/>
        <end position="334"/>
    </location>
</feature>
<feature type="domain" description="CheB-type methylesterase" evidence="2">
    <location>
        <begin position="147"/>
        <end position="334"/>
    </location>
</feature>
<feature type="active site" evidence="2">
    <location>
        <position position="156"/>
    </location>
</feature>
<feature type="active site" evidence="2">
    <location>
        <position position="183"/>
    </location>
</feature>
<feature type="active site" evidence="2">
    <location>
        <position position="276"/>
    </location>
</feature>
<organism>
    <name type="scientific">Myxococcus xanthus</name>
    <dbReference type="NCBI Taxonomy" id="34"/>
    <lineage>
        <taxon>Bacteria</taxon>
        <taxon>Pseudomonadati</taxon>
        <taxon>Myxococcota</taxon>
        <taxon>Myxococcia</taxon>
        <taxon>Myxococcales</taxon>
        <taxon>Cystobacterineae</taxon>
        <taxon>Myxococcaceae</taxon>
        <taxon>Myxococcus</taxon>
    </lineage>
</organism>
<sequence length="334" mass="35497">MAFRVLMVGKGLRALAARGLFDGESLVPVGPAEVDFAGALVAVQRHFPDVVLVDLSALDALPAIEHVMVERPVPVLALHPGVLSGQEAFQAMVAGALDVLERPANPGPEFWTHVSRKLVLLAQVKAVRQVQTRPPPQAAREAKPPPPYPLVAIAASLGGPKAVAQVLRMIPRAFPAPIAYCQHISDGFTEGLAHWLSNETALRVLEAEHDVLMAPGTVYIAPSGSHLLVRPEGRLELDAGPALRGFRPSCDMLLTSAGESFGPRCIGVILTGMGRDGARGLKEIRERGGRTIAQDEASSVVWGMPREAVLMGAAHEVLPLSRIGAALMQWVDVC</sequence>
<gene>
    <name type="primary">frzG</name>
</gene>
<accession>P31758</accession>
<proteinExistence type="inferred from homology"/>
<evidence type="ECO:0000250" key="1"/>
<evidence type="ECO:0000255" key="2">
    <source>
        <dbReference type="PROSITE-ProRule" id="PRU00050"/>
    </source>
</evidence>
<evidence type="ECO:0000269" key="3">
    <source>
    </source>
</evidence>
<keyword id="KW-0145">Chemotaxis</keyword>
<keyword id="KW-0378">Hydrolase</keyword>
<protein>
    <recommendedName>
        <fullName>Protein-glutamate methylesterase FrzG</fullName>
        <ecNumber>3.1.1.61</ecNumber>
    </recommendedName>
</protein>